<dbReference type="EC" id="6.3.4.13" evidence="2"/>
<dbReference type="EMBL" id="AE005174">
    <property type="protein sequence ID" value="AAG59202.1"/>
    <property type="molecule type" value="Genomic_DNA"/>
</dbReference>
<dbReference type="EMBL" id="BA000007">
    <property type="protein sequence ID" value="BAB38351.1"/>
    <property type="molecule type" value="Genomic_DNA"/>
</dbReference>
<dbReference type="PIR" id="F86092">
    <property type="entry name" value="F86092"/>
</dbReference>
<dbReference type="PIR" id="H91244">
    <property type="entry name" value="H91244"/>
</dbReference>
<dbReference type="RefSeq" id="NP_312955.1">
    <property type="nucleotide sequence ID" value="NC_002695.1"/>
</dbReference>
<dbReference type="RefSeq" id="WP_000866861.1">
    <property type="nucleotide sequence ID" value="NZ_VOAI01000037.1"/>
</dbReference>
<dbReference type="SMR" id="Q8X612"/>
<dbReference type="STRING" id="155864.Z5582"/>
<dbReference type="GeneID" id="914922"/>
<dbReference type="KEGG" id="ece:Z5582"/>
<dbReference type="KEGG" id="ecs:ECs_4928"/>
<dbReference type="PATRIC" id="fig|386585.9.peg.5154"/>
<dbReference type="eggNOG" id="COG0151">
    <property type="taxonomic scope" value="Bacteria"/>
</dbReference>
<dbReference type="HOGENOM" id="CLU_027420_3_1_6"/>
<dbReference type="OMA" id="KATVCKY"/>
<dbReference type="UniPathway" id="UPA00074">
    <property type="reaction ID" value="UER00125"/>
</dbReference>
<dbReference type="Proteomes" id="UP000000558">
    <property type="component" value="Chromosome"/>
</dbReference>
<dbReference type="Proteomes" id="UP000002519">
    <property type="component" value="Chromosome"/>
</dbReference>
<dbReference type="GO" id="GO:0005524">
    <property type="term" value="F:ATP binding"/>
    <property type="evidence" value="ECO:0007669"/>
    <property type="project" value="UniProtKB-KW"/>
</dbReference>
<dbReference type="GO" id="GO:0046872">
    <property type="term" value="F:metal ion binding"/>
    <property type="evidence" value="ECO:0007669"/>
    <property type="project" value="UniProtKB-KW"/>
</dbReference>
<dbReference type="GO" id="GO:0004637">
    <property type="term" value="F:phosphoribosylamine-glycine ligase activity"/>
    <property type="evidence" value="ECO:0007669"/>
    <property type="project" value="UniProtKB-UniRule"/>
</dbReference>
<dbReference type="GO" id="GO:0006189">
    <property type="term" value="P:'de novo' IMP biosynthetic process"/>
    <property type="evidence" value="ECO:0007669"/>
    <property type="project" value="UniProtKB-UniRule"/>
</dbReference>
<dbReference type="GO" id="GO:0009113">
    <property type="term" value="P:purine nucleobase biosynthetic process"/>
    <property type="evidence" value="ECO:0007669"/>
    <property type="project" value="InterPro"/>
</dbReference>
<dbReference type="FunFam" id="3.30.470.20:FF:000031">
    <property type="entry name" value="Phosphoribosylamine--glycine ligase"/>
    <property type="match status" value="1"/>
</dbReference>
<dbReference type="FunFam" id="3.40.50.20:FF:000006">
    <property type="entry name" value="Phosphoribosylamine--glycine ligase, chloroplastic"/>
    <property type="match status" value="1"/>
</dbReference>
<dbReference type="FunFam" id="3.30.1490.20:FF:000006">
    <property type="entry name" value="phosphoribosylamine--glycine ligase, chloroplastic-like"/>
    <property type="match status" value="1"/>
</dbReference>
<dbReference type="FunFam" id="3.90.600.10:FF:000001">
    <property type="entry name" value="Trifunctional purine biosynthetic protein adenosine-3"/>
    <property type="match status" value="1"/>
</dbReference>
<dbReference type="Gene3D" id="3.40.50.20">
    <property type="match status" value="1"/>
</dbReference>
<dbReference type="Gene3D" id="3.30.1490.20">
    <property type="entry name" value="ATP-grasp fold, A domain"/>
    <property type="match status" value="1"/>
</dbReference>
<dbReference type="Gene3D" id="3.30.470.20">
    <property type="entry name" value="ATP-grasp fold, B domain"/>
    <property type="match status" value="1"/>
</dbReference>
<dbReference type="Gene3D" id="3.90.600.10">
    <property type="entry name" value="Phosphoribosylglycinamide synthetase, C-terminal domain"/>
    <property type="match status" value="1"/>
</dbReference>
<dbReference type="HAMAP" id="MF_00138">
    <property type="entry name" value="GARS"/>
    <property type="match status" value="1"/>
</dbReference>
<dbReference type="InterPro" id="IPR011761">
    <property type="entry name" value="ATP-grasp"/>
</dbReference>
<dbReference type="InterPro" id="IPR013815">
    <property type="entry name" value="ATP_grasp_subdomain_1"/>
</dbReference>
<dbReference type="InterPro" id="IPR016185">
    <property type="entry name" value="PreATP-grasp_dom_sf"/>
</dbReference>
<dbReference type="InterPro" id="IPR020561">
    <property type="entry name" value="PRibGlycinamid_synth_ATP-grasp"/>
</dbReference>
<dbReference type="InterPro" id="IPR000115">
    <property type="entry name" value="PRibGlycinamide_synth"/>
</dbReference>
<dbReference type="InterPro" id="IPR020560">
    <property type="entry name" value="PRibGlycinamide_synth_C-dom"/>
</dbReference>
<dbReference type="InterPro" id="IPR037123">
    <property type="entry name" value="PRibGlycinamide_synth_C_sf"/>
</dbReference>
<dbReference type="InterPro" id="IPR020559">
    <property type="entry name" value="PRibGlycinamide_synth_CS"/>
</dbReference>
<dbReference type="InterPro" id="IPR020562">
    <property type="entry name" value="PRibGlycinamide_synth_N"/>
</dbReference>
<dbReference type="InterPro" id="IPR011054">
    <property type="entry name" value="Rudment_hybrid_motif"/>
</dbReference>
<dbReference type="NCBIfam" id="TIGR00877">
    <property type="entry name" value="purD"/>
    <property type="match status" value="1"/>
</dbReference>
<dbReference type="PANTHER" id="PTHR43472">
    <property type="entry name" value="PHOSPHORIBOSYLAMINE--GLYCINE LIGASE"/>
    <property type="match status" value="1"/>
</dbReference>
<dbReference type="PANTHER" id="PTHR43472:SF1">
    <property type="entry name" value="PHOSPHORIBOSYLAMINE--GLYCINE LIGASE, CHLOROPLASTIC"/>
    <property type="match status" value="1"/>
</dbReference>
<dbReference type="Pfam" id="PF01071">
    <property type="entry name" value="GARS_A"/>
    <property type="match status" value="1"/>
</dbReference>
<dbReference type="Pfam" id="PF02843">
    <property type="entry name" value="GARS_C"/>
    <property type="match status" value="1"/>
</dbReference>
<dbReference type="Pfam" id="PF02844">
    <property type="entry name" value="GARS_N"/>
    <property type="match status" value="1"/>
</dbReference>
<dbReference type="SMART" id="SM01209">
    <property type="entry name" value="GARS_A"/>
    <property type="match status" value="1"/>
</dbReference>
<dbReference type="SMART" id="SM01210">
    <property type="entry name" value="GARS_C"/>
    <property type="match status" value="1"/>
</dbReference>
<dbReference type="SUPFAM" id="SSF56059">
    <property type="entry name" value="Glutathione synthetase ATP-binding domain-like"/>
    <property type="match status" value="1"/>
</dbReference>
<dbReference type="SUPFAM" id="SSF52440">
    <property type="entry name" value="PreATP-grasp domain"/>
    <property type="match status" value="1"/>
</dbReference>
<dbReference type="SUPFAM" id="SSF51246">
    <property type="entry name" value="Rudiment single hybrid motif"/>
    <property type="match status" value="1"/>
</dbReference>
<dbReference type="PROSITE" id="PS50975">
    <property type="entry name" value="ATP_GRASP"/>
    <property type="match status" value="1"/>
</dbReference>
<dbReference type="PROSITE" id="PS00184">
    <property type="entry name" value="GARS"/>
    <property type="match status" value="1"/>
</dbReference>
<evidence type="ECO:0000250" key="1"/>
<evidence type="ECO:0000255" key="2">
    <source>
        <dbReference type="HAMAP-Rule" id="MF_00138"/>
    </source>
</evidence>
<evidence type="ECO:0000256" key="3">
    <source>
        <dbReference type="SAM" id="MobiDB-lite"/>
    </source>
</evidence>
<feature type="chain" id="PRO_0000151450" description="Phosphoribosylamine--glycine ligase">
    <location>
        <begin position="1"/>
        <end position="429"/>
    </location>
</feature>
<feature type="domain" description="ATP-grasp" evidence="2">
    <location>
        <begin position="109"/>
        <end position="316"/>
    </location>
</feature>
<feature type="region of interest" description="Disordered" evidence="3">
    <location>
        <begin position="212"/>
        <end position="237"/>
    </location>
</feature>
<feature type="compositionally biased region" description="Basic and acidic residues" evidence="3">
    <location>
        <begin position="213"/>
        <end position="223"/>
    </location>
</feature>
<feature type="binding site" evidence="2">
    <location>
        <begin position="135"/>
        <end position="196"/>
    </location>
    <ligand>
        <name>ATP</name>
        <dbReference type="ChEBI" id="CHEBI:30616"/>
    </ligand>
</feature>
<feature type="binding site" evidence="2">
    <location>
        <position position="286"/>
    </location>
    <ligand>
        <name>Mg(2+)</name>
        <dbReference type="ChEBI" id="CHEBI:18420"/>
    </ligand>
</feature>
<feature type="binding site" evidence="2">
    <location>
        <position position="288"/>
    </location>
    <ligand>
        <name>Mg(2+)</name>
        <dbReference type="ChEBI" id="CHEBI:18420"/>
    </ligand>
</feature>
<accession>Q8X612</accession>
<organism>
    <name type="scientific">Escherichia coli O157:H7</name>
    <dbReference type="NCBI Taxonomy" id="83334"/>
    <lineage>
        <taxon>Bacteria</taxon>
        <taxon>Pseudomonadati</taxon>
        <taxon>Pseudomonadota</taxon>
        <taxon>Gammaproteobacteria</taxon>
        <taxon>Enterobacterales</taxon>
        <taxon>Enterobacteriaceae</taxon>
        <taxon>Escherichia</taxon>
    </lineage>
</organism>
<gene>
    <name evidence="2" type="primary">purD</name>
    <name type="ordered locus">Z5582</name>
    <name type="ordered locus">ECs4928</name>
</gene>
<sequence>MKVLVIGNGGREHALAWKAAQSPLVETVFVAPGNAGTALEPTLQNVAIGVTDIPALLDFAQNEKVDLTIVGPEAPLVKGVVDTFRAAGMKIFGPTAGAAQLEGSKAFTKDFLARHNIPTAEYQNFTEVEPALAYLREKGAPIVIKADGLAAGKGVIVAMTLEEAEAAVHDMLAGNAFGDAGHRIVIEEFLDGEEASFIVMVDGEHVLPMATSQDHKRVGDKDTGPNTGGMGAYSPAPVVTDDVHQRTMERIIWPTVKGMASEGNTYTGFLYAGLMIDKQGNPKVIEFNCRFGDPETQPIMLRMKSDLVELCLAACEGKLDEKTSEWDERASLGVVMAAGGYPGDYRTGDVIHGLPLEEVEDGKVFHAGTKLADDEQVVTSGGRVLCVTALGHTVAEAQKRAYALMTDIHWDDCFCRKDIGWRAIEREQN</sequence>
<proteinExistence type="inferred from homology"/>
<name>PUR2_ECO57</name>
<keyword id="KW-0067">ATP-binding</keyword>
<keyword id="KW-0436">Ligase</keyword>
<keyword id="KW-0460">Magnesium</keyword>
<keyword id="KW-0464">Manganese</keyword>
<keyword id="KW-0479">Metal-binding</keyword>
<keyword id="KW-0547">Nucleotide-binding</keyword>
<keyword id="KW-0658">Purine biosynthesis</keyword>
<keyword id="KW-1185">Reference proteome</keyword>
<protein>
    <recommendedName>
        <fullName evidence="2">Phosphoribosylamine--glycine ligase</fullName>
        <ecNumber evidence="2">6.3.4.13</ecNumber>
    </recommendedName>
    <alternativeName>
        <fullName evidence="2">GARS</fullName>
    </alternativeName>
    <alternativeName>
        <fullName evidence="2">Glycinamide ribonucleotide synthetase</fullName>
    </alternativeName>
    <alternativeName>
        <fullName evidence="2">Phosphoribosylglycinamide synthetase</fullName>
    </alternativeName>
</protein>
<reference key="1">
    <citation type="journal article" date="2001" name="Nature">
        <title>Genome sequence of enterohaemorrhagic Escherichia coli O157:H7.</title>
        <authorList>
            <person name="Perna N.T."/>
            <person name="Plunkett G. III"/>
            <person name="Burland V."/>
            <person name="Mau B."/>
            <person name="Glasner J.D."/>
            <person name="Rose D.J."/>
            <person name="Mayhew G.F."/>
            <person name="Evans P.S."/>
            <person name="Gregor J."/>
            <person name="Kirkpatrick H.A."/>
            <person name="Posfai G."/>
            <person name="Hackett J."/>
            <person name="Klink S."/>
            <person name="Boutin A."/>
            <person name="Shao Y."/>
            <person name="Miller L."/>
            <person name="Grotbeck E.J."/>
            <person name="Davis N.W."/>
            <person name="Lim A."/>
            <person name="Dimalanta E.T."/>
            <person name="Potamousis K."/>
            <person name="Apodaca J."/>
            <person name="Anantharaman T.S."/>
            <person name="Lin J."/>
            <person name="Yen G."/>
            <person name="Schwartz D.C."/>
            <person name="Welch R.A."/>
            <person name="Blattner F.R."/>
        </authorList>
    </citation>
    <scope>NUCLEOTIDE SEQUENCE [LARGE SCALE GENOMIC DNA]</scope>
    <source>
        <strain>O157:H7 / EDL933 / ATCC 700927 / EHEC</strain>
    </source>
</reference>
<reference key="2">
    <citation type="journal article" date="2001" name="DNA Res.">
        <title>Complete genome sequence of enterohemorrhagic Escherichia coli O157:H7 and genomic comparison with a laboratory strain K-12.</title>
        <authorList>
            <person name="Hayashi T."/>
            <person name="Makino K."/>
            <person name="Ohnishi M."/>
            <person name="Kurokawa K."/>
            <person name="Ishii K."/>
            <person name="Yokoyama K."/>
            <person name="Han C.-G."/>
            <person name="Ohtsubo E."/>
            <person name="Nakayama K."/>
            <person name="Murata T."/>
            <person name="Tanaka M."/>
            <person name="Tobe T."/>
            <person name="Iida T."/>
            <person name="Takami H."/>
            <person name="Honda T."/>
            <person name="Sasakawa C."/>
            <person name="Ogasawara N."/>
            <person name="Yasunaga T."/>
            <person name="Kuhara S."/>
            <person name="Shiba T."/>
            <person name="Hattori M."/>
            <person name="Shinagawa H."/>
        </authorList>
    </citation>
    <scope>NUCLEOTIDE SEQUENCE [LARGE SCALE GENOMIC DNA]</scope>
    <source>
        <strain>O157:H7 / Sakai / RIMD 0509952 / EHEC</strain>
    </source>
</reference>
<comment type="catalytic activity">
    <reaction evidence="2">
        <text>5-phospho-beta-D-ribosylamine + glycine + ATP = N(1)-(5-phospho-beta-D-ribosyl)glycinamide + ADP + phosphate + H(+)</text>
        <dbReference type="Rhea" id="RHEA:17453"/>
        <dbReference type="ChEBI" id="CHEBI:15378"/>
        <dbReference type="ChEBI" id="CHEBI:30616"/>
        <dbReference type="ChEBI" id="CHEBI:43474"/>
        <dbReference type="ChEBI" id="CHEBI:57305"/>
        <dbReference type="ChEBI" id="CHEBI:58681"/>
        <dbReference type="ChEBI" id="CHEBI:143788"/>
        <dbReference type="ChEBI" id="CHEBI:456216"/>
        <dbReference type="EC" id="6.3.4.13"/>
    </reaction>
</comment>
<comment type="cofactor">
    <cofactor evidence="1">
        <name>Mg(2+)</name>
        <dbReference type="ChEBI" id="CHEBI:18420"/>
    </cofactor>
    <cofactor evidence="1">
        <name>Mn(2+)</name>
        <dbReference type="ChEBI" id="CHEBI:29035"/>
    </cofactor>
    <text evidence="1">Binds 1 Mg(2+) or Mn(2+) ion per subunit.</text>
</comment>
<comment type="pathway">
    <text evidence="2">Purine metabolism; IMP biosynthesis via de novo pathway; N(1)-(5-phospho-D-ribosyl)glycinamide from 5-phospho-alpha-D-ribose 1-diphosphate: step 2/2.</text>
</comment>
<comment type="subunit">
    <text evidence="2">Monomer.</text>
</comment>
<comment type="similarity">
    <text evidence="2">Belongs to the GARS family.</text>
</comment>